<comment type="similarity">
    <text evidence="2">Belongs to the bacterial ribosomal protein bS21 family.</text>
</comment>
<evidence type="ECO:0000256" key="1">
    <source>
        <dbReference type="SAM" id="MobiDB-lite"/>
    </source>
</evidence>
<evidence type="ECO:0000305" key="2"/>
<gene>
    <name type="primary">rpsU</name>
    <name type="ordered locus">PP_0389</name>
</gene>
<keyword id="KW-1185">Reference proteome</keyword>
<keyword id="KW-0687">Ribonucleoprotein</keyword>
<keyword id="KW-0689">Ribosomal protein</keyword>
<dbReference type="EMBL" id="AE015451">
    <property type="protein sequence ID" value="AAN66020.1"/>
    <property type="molecule type" value="Genomic_DNA"/>
</dbReference>
<dbReference type="RefSeq" id="NP_742556.1">
    <property type="nucleotide sequence ID" value="NC_002947.4"/>
</dbReference>
<dbReference type="RefSeq" id="WP_003255575.1">
    <property type="nucleotide sequence ID" value="NZ_CP169744.1"/>
</dbReference>
<dbReference type="SMR" id="P0A165"/>
<dbReference type="STRING" id="160488.PP_0389"/>
<dbReference type="PaxDb" id="160488-PP_0389"/>
<dbReference type="GeneID" id="97165908"/>
<dbReference type="KEGG" id="ppu:PP_0389"/>
<dbReference type="PATRIC" id="fig|160488.4.peg.419"/>
<dbReference type="eggNOG" id="COG0828">
    <property type="taxonomic scope" value="Bacteria"/>
</dbReference>
<dbReference type="HOGENOM" id="CLU_159258_1_0_6"/>
<dbReference type="OrthoDB" id="9799244at2"/>
<dbReference type="PhylomeDB" id="P0A165"/>
<dbReference type="BioCyc" id="PPUT160488:G1G01-426-MONOMER"/>
<dbReference type="Proteomes" id="UP000000556">
    <property type="component" value="Chromosome"/>
</dbReference>
<dbReference type="GO" id="GO:1990904">
    <property type="term" value="C:ribonucleoprotein complex"/>
    <property type="evidence" value="ECO:0007669"/>
    <property type="project" value="UniProtKB-KW"/>
</dbReference>
<dbReference type="GO" id="GO:0005840">
    <property type="term" value="C:ribosome"/>
    <property type="evidence" value="ECO:0007669"/>
    <property type="project" value="UniProtKB-KW"/>
</dbReference>
<dbReference type="GO" id="GO:0003735">
    <property type="term" value="F:structural constituent of ribosome"/>
    <property type="evidence" value="ECO:0007669"/>
    <property type="project" value="InterPro"/>
</dbReference>
<dbReference type="GO" id="GO:0006412">
    <property type="term" value="P:translation"/>
    <property type="evidence" value="ECO:0007669"/>
    <property type="project" value="UniProtKB-UniRule"/>
</dbReference>
<dbReference type="Gene3D" id="1.20.5.1150">
    <property type="entry name" value="Ribosomal protein S8"/>
    <property type="match status" value="1"/>
</dbReference>
<dbReference type="HAMAP" id="MF_00358">
    <property type="entry name" value="Ribosomal_bS21"/>
    <property type="match status" value="1"/>
</dbReference>
<dbReference type="InterPro" id="IPR001911">
    <property type="entry name" value="Ribosomal_bS21"/>
</dbReference>
<dbReference type="InterPro" id="IPR018278">
    <property type="entry name" value="Ribosomal_bS21_CS"/>
</dbReference>
<dbReference type="InterPro" id="IPR038380">
    <property type="entry name" value="Ribosomal_bS21_sf"/>
</dbReference>
<dbReference type="NCBIfam" id="TIGR00030">
    <property type="entry name" value="S21p"/>
    <property type="match status" value="1"/>
</dbReference>
<dbReference type="PANTHER" id="PTHR21109">
    <property type="entry name" value="MITOCHONDRIAL 28S RIBOSOMAL PROTEIN S21"/>
    <property type="match status" value="1"/>
</dbReference>
<dbReference type="PANTHER" id="PTHR21109:SF22">
    <property type="entry name" value="SMALL RIBOSOMAL SUBUNIT PROTEIN BS21"/>
    <property type="match status" value="1"/>
</dbReference>
<dbReference type="Pfam" id="PF01165">
    <property type="entry name" value="Ribosomal_S21"/>
    <property type="match status" value="1"/>
</dbReference>
<dbReference type="PRINTS" id="PR00976">
    <property type="entry name" value="RIBOSOMALS21"/>
</dbReference>
<dbReference type="PROSITE" id="PS01181">
    <property type="entry name" value="RIBOSOMAL_S21"/>
    <property type="match status" value="1"/>
</dbReference>
<name>RS21_PSEPK</name>
<feature type="chain" id="PRO_0000178360" description="Small ribosomal subunit protein bS21">
    <location>
        <begin position="1"/>
        <end position="71"/>
    </location>
</feature>
<feature type="region of interest" description="Disordered" evidence="1">
    <location>
        <begin position="50"/>
        <end position="71"/>
    </location>
</feature>
<feature type="compositionally biased region" description="Basic residues" evidence="1">
    <location>
        <begin position="50"/>
        <end position="59"/>
    </location>
</feature>
<feature type="compositionally biased region" description="Basic and acidic residues" evidence="1">
    <location>
        <begin position="60"/>
        <end position="71"/>
    </location>
</feature>
<reference key="1">
    <citation type="journal article" date="2002" name="Environ. Microbiol.">
        <title>Complete genome sequence and comparative analysis of the metabolically versatile Pseudomonas putida KT2440.</title>
        <authorList>
            <person name="Nelson K.E."/>
            <person name="Weinel C."/>
            <person name="Paulsen I.T."/>
            <person name="Dodson R.J."/>
            <person name="Hilbert H."/>
            <person name="Martins dos Santos V.A.P."/>
            <person name="Fouts D.E."/>
            <person name="Gill S.R."/>
            <person name="Pop M."/>
            <person name="Holmes M."/>
            <person name="Brinkac L.M."/>
            <person name="Beanan M.J."/>
            <person name="DeBoy R.T."/>
            <person name="Daugherty S.C."/>
            <person name="Kolonay J.F."/>
            <person name="Madupu R."/>
            <person name="Nelson W.C."/>
            <person name="White O."/>
            <person name="Peterson J.D."/>
            <person name="Khouri H.M."/>
            <person name="Hance I."/>
            <person name="Chris Lee P."/>
            <person name="Holtzapple E.K."/>
            <person name="Scanlan D."/>
            <person name="Tran K."/>
            <person name="Moazzez A."/>
            <person name="Utterback T.R."/>
            <person name="Rizzo M."/>
            <person name="Lee K."/>
            <person name="Kosack D."/>
            <person name="Moestl D."/>
            <person name="Wedler H."/>
            <person name="Lauber J."/>
            <person name="Stjepandic D."/>
            <person name="Hoheisel J."/>
            <person name="Straetz M."/>
            <person name="Heim S."/>
            <person name="Kiewitz C."/>
            <person name="Eisen J.A."/>
            <person name="Timmis K.N."/>
            <person name="Duesterhoeft A."/>
            <person name="Tuemmler B."/>
            <person name="Fraser C.M."/>
        </authorList>
    </citation>
    <scope>NUCLEOTIDE SEQUENCE [LARGE SCALE GENOMIC DNA]</scope>
    <source>
        <strain>ATCC 47054 / DSM 6125 / CFBP 8728 / NCIMB 11950 / KT2440</strain>
    </source>
</reference>
<organism>
    <name type="scientific">Pseudomonas putida (strain ATCC 47054 / DSM 6125 / CFBP 8728 / NCIMB 11950 / KT2440)</name>
    <dbReference type="NCBI Taxonomy" id="160488"/>
    <lineage>
        <taxon>Bacteria</taxon>
        <taxon>Pseudomonadati</taxon>
        <taxon>Pseudomonadota</taxon>
        <taxon>Gammaproteobacteria</taxon>
        <taxon>Pseudomonadales</taxon>
        <taxon>Pseudomonadaceae</taxon>
        <taxon>Pseudomonas</taxon>
    </lineage>
</organism>
<sequence length="71" mass="8370">MPAVKVKENEPFDVALRRFKRSCEKAGVLAEVRSREFYEKPTAERKRKAAAAVKRHAKKVQREQRRAVRLY</sequence>
<proteinExistence type="inferred from homology"/>
<accession>P0A165</accession>
<accession>O51942</accession>
<protein>
    <recommendedName>
        <fullName evidence="2">Small ribosomal subunit protein bS21</fullName>
    </recommendedName>
    <alternativeName>
        <fullName>30S ribosomal protein S21</fullName>
    </alternativeName>
</protein>